<accession>Q87YF5</accession>
<feature type="chain" id="PRO_0000190939" description="Tetraacyldisaccharide 4'-kinase">
    <location>
        <begin position="1"/>
        <end position="331"/>
    </location>
</feature>
<feature type="binding site" evidence="1">
    <location>
        <begin position="60"/>
        <end position="67"/>
    </location>
    <ligand>
        <name>ATP</name>
        <dbReference type="ChEBI" id="CHEBI:30616"/>
    </ligand>
</feature>
<proteinExistence type="inferred from homology"/>
<protein>
    <recommendedName>
        <fullName evidence="1">Tetraacyldisaccharide 4'-kinase</fullName>
        <ecNumber evidence="1">2.7.1.130</ecNumber>
    </recommendedName>
    <alternativeName>
        <fullName evidence="1">Lipid A 4'-kinase</fullName>
    </alternativeName>
</protein>
<name>LPXK_PSESM</name>
<keyword id="KW-0067">ATP-binding</keyword>
<keyword id="KW-0418">Kinase</keyword>
<keyword id="KW-0441">Lipid A biosynthesis</keyword>
<keyword id="KW-0444">Lipid biosynthesis</keyword>
<keyword id="KW-0443">Lipid metabolism</keyword>
<keyword id="KW-0547">Nucleotide-binding</keyword>
<keyword id="KW-1185">Reference proteome</keyword>
<keyword id="KW-0808">Transferase</keyword>
<reference key="1">
    <citation type="journal article" date="2003" name="Proc. Natl. Acad. Sci. U.S.A.">
        <title>The complete genome sequence of the Arabidopsis and tomato pathogen Pseudomonas syringae pv. tomato DC3000.</title>
        <authorList>
            <person name="Buell C.R."/>
            <person name="Joardar V."/>
            <person name="Lindeberg M."/>
            <person name="Selengut J."/>
            <person name="Paulsen I.T."/>
            <person name="Gwinn M.L."/>
            <person name="Dodson R.J."/>
            <person name="DeBoy R.T."/>
            <person name="Durkin A.S."/>
            <person name="Kolonay J.F."/>
            <person name="Madupu R."/>
            <person name="Daugherty S.C."/>
            <person name="Brinkac L.M."/>
            <person name="Beanan M.J."/>
            <person name="Haft D.H."/>
            <person name="Nelson W.C."/>
            <person name="Davidsen T.M."/>
            <person name="Zafar N."/>
            <person name="Zhou L."/>
            <person name="Liu J."/>
            <person name="Yuan Q."/>
            <person name="Khouri H.M."/>
            <person name="Fedorova N.B."/>
            <person name="Tran B."/>
            <person name="Russell D."/>
            <person name="Berry K.J."/>
            <person name="Utterback T.R."/>
            <person name="Van Aken S.E."/>
            <person name="Feldblyum T.V."/>
            <person name="D'Ascenzo M."/>
            <person name="Deng W.-L."/>
            <person name="Ramos A.R."/>
            <person name="Alfano J.R."/>
            <person name="Cartinhour S."/>
            <person name="Chatterjee A.K."/>
            <person name="Delaney T.P."/>
            <person name="Lazarowitz S.G."/>
            <person name="Martin G.B."/>
            <person name="Schneider D.J."/>
            <person name="Tang X."/>
            <person name="Bender C.L."/>
            <person name="White O."/>
            <person name="Fraser C.M."/>
            <person name="Collmer A."/>
        </authorList>
    </citation>
    <scope>NUCLEOTIDE SEQUENCE [LARGE SCALE GENOMIC DNA]</scope>
    <source>
        <strain>ATCC BAA-871 / DC3000</strain>
    </source>
</reference>
<gene>
    <name evidence="1" type="primary">lpxK</name>
    <name type="ordered locus">PSPTO_3845</name>
</gene>
<dbReference type="EC" id="2.7.1.130" evidence="1"/>
<dbReference type="EMBL" id="AE016853">
    <property type="protein sequence ID" value="AAO57312.1"/>
    <property type="molecule type" value="Genomic_DNA"/>
</dbReference>
<dbReference type="RefSeq" id="NP_793617.1">
    <property type="nucleotide sequence ID" value="NC_004578.1"/>
</dbReference>
<dbReference type="RefSeq" id="WP_005770644.1">
    <property type="nucleotide sequence ID" value="NC_004578.1"/>
</dbReference>
<dbReference type="SMR" id="Q87YF5"/>
<dbReference type="STRING" id="223283.PSPTO_3845"/>
<dbReference type="GeneID" id="1185516"/>
<dbReference type="KEGG" id="pst:PSPTO_3845"/>
<dbReference type="PATRIC" id="fig|223283.9.peg.3942"/>
<dbReference type="eggNOG" id="COG1663">
    <property type="taxonomic scope" value="Bacteria"/>
</dbReference>
<dbReference type="HOGENOM" id="CLU_038816_2_0_6"/>
<dbReference type="OrthoDB" id="9766423at2"/>
<dbReference type="PhylomeDB" id="Q87YF5"/>
<dbReference type="UniPathway" id="UPA00359">
    <property type="reaction ID" value="UER00482"/>
</dbReference>
<dbReference type="Proteomes" id="UP000002515">
    <property type="component" value="Chromosome"/>
</dbReference>
<dbReference type="GO" id="GO:0005886">
    <property type="term" value="C:plasma membrane"/>
    <property type="evidence" value="ECO:0007669"/>
    <property type="project" value="TreeGrafter"/>
</dbReference>
<dbReference type="GO" id="GO:0005524">
    <property type="term" value="F:ATP binding"/>
    <property type="evidence" value="ECO:0007669"/>
    <property type="project" value="UniProtKB-UniRule"/>
</dbReference>
<dbReference type="GO" id="GO:0009029">
    <property type="term" value="F:tetraacyldisaccharide 4'-kinase activity"/>
    <property type="evidence" value="ECO:0007669"/>
    <property type="project" value="UniProtKB-UniRule"/>
</dbReference>
<dbReference type="GO" id="GO:0009245">
    <property type="term" value="P:lipid A biosynthetic process"/>
    <property type="evidence" value="ECO:0007669"/>
    <property type="project" value="UniProtKB-UniRule"/>
</dbReference>
<dbReference type="GO" id="GO:0009244">
    <property type="term" value="P:lipopolysaccharide core region biosynthetic process"/>
    <property type="evidence" value="ECO:0007669"/>
    <property type="project" value="TreeGrafter"/>
</dbReference>
<dbReference type="HAMAP" id="MF_00409">
    <property type="entry name" value="LpxK"/>
    <property type="match status" value="1"/>
</dbReference>
<dbReference type="InterPro" id="IPR003758">
    <property type="entry name" value="LpxK"/>
</dbReference>
<dbReference type="InterPro" id="IPR027417">
    <property type="entry name" value="P-loop_NTPase"/>
</dbReference>
<dbReference type="NCBIfam" id="TIGR00682">
    <property type="entry name" value="lpxK"/>
    <property type="match status" value="1"/>
</dbReference>
<dbReference type="PANTHER" id="PTHR42724">
    <property type="entry name" value="TETRAACYLDISACCHARIDE 4'-KINASE"/>
    <property type="match status" value="1"/>
</dbReference>
<dbReference type="PANTHER" id="PTHR42724:SF1">
    <property type="entry name" value="TETRAACYLDISACCHARIDE 4'-KINASE, MITOCHONDRIAL-RELATED"/>
    <property type="match status" value="1"/>
</dbReference>
<dbReference type="Pfam" id="PF02606">
    <property type="entry name" value="LpxK"/>
    <property type="match status" value="1"/>
</dbReference>
<dbReference type="SUPFAM" id="SSF52540">
    <property type="entry name" value="P-loop containing nucleoside triphosphate hydrolases"/>
    <property type="match status" value="1"/>
</dbReference>
<comment type="function">
    <text evidence="1">Transfers the gamma-phosphate of ATP to the 4'-position of a tetraacyldisaccharide 1-phosphate intermediate (termed DS-1-P) to form tetraacyldisaccharide 1,4'-bis-phosphate (lipid IVA).</text>
</comment>
<comment type="catalytic activity">
    <reaction evidence="1">
        <text>a lipid A disaccharide + ATP = a lipid IVA + ADP + H(+)</text>
        <dbReference type="Rhea" id="RHEA:67840"/>
        <dbReference type="ChEBI" id="CHEBI:15378"/>
        <dbReference type="ChEBI" id="CHEBI:30616"/>
        <dbReference type="ChEBI" id="CHEBI:176343"/>
        <dbReference type="ChEBI" id="CHEBI:176425"/>
        <dbReference type="ChEBI" id="CHEBI:456216"/>
        <dbReference type="EC" id="2.7.1.130"/>
    </reaction>
</comment>
<comment type="pathway">
    <text evidence="1">Glycolipid biosynthesis; lipid IV(A) biosynthesis; lipid IV(A) from (3R)-3-hydroxytetradecanoyl-[acyl-carrier-protein] and UDP-N-acetyl-alpha-D-glucosamine: step 6/6.</text>
</comment>
<comment type="similarity">
    <text evidence="1">Belongs to the LpxK family.</text>
</comment>
<evidence type="ECO:0000255" key="1">
    <source>
        <dbReference type="HAMAP-Rule" id="MF_00409"/>
    </source>
</evidence>
<sequence length="331" mass="36385">MALTDRLLDAWYKGHPALTLLRPLESLYRRVVDGKRAKFLAGEGDIYRAPVPVIVVGNITIGGTGKTPLILWMIEHCQRKGLRVGVVSRGYGAKPPSLPWRVQPDQSASEAGDEPLLIVQRSGVPLMIDPDRSRAVQALLAAEPLDLILSDDGLQHYRLARDLELVLIDAARGLGNRRCLPAGPLREPVERLSSVDALLYNGATADRDDGYAFTLKPSALINLRSGERQPVSYFPAGQALHAVAGIGNPQRFFNTLEGLHWRPVTHAFADHALYSVQALTFTPALPLVMTEKDAVKCRAFAADDWWYLAVDAVPSDAFVGWFDEQLLRLSP</sequence>
<organism>
    <name type="scientific">Pseudomonas syringae pv. tomato (strain ATCC BAA-871 / DC3000)</name>
    <dbReference type="NCBI Taxonomy" id="223283"/>
    <lineage>
        <taxon>Bacteria</taxon>
        <taxon>Pseudomonadati</taxon>
        <taxon>Pseudomonadota</taxon>
        <taxon>Gammaproteobacteria</taxon>
        <taxon>Pseudomonadales</taxon>
        <taxon>Pseudomonadaceae</taxon>
        <taxon>Pseudomonas</taxon>
    </lineage>
</organism>